<dbReference type="EC" id="2.7.1.33" evidence="1"/>
<dbReference type="EMBL" id="AL583917">
    <property type="protein sequence ID" value="CAC29740.1"/>
    <property type="molecule type" value="Genomic_DNA"/>
</dbReference>
<dbReference type="PIR" id="H86937">
    <property type="entry name" value="H86937"/>
</dbReference>
<dbReference type="RefSeq" id="NP_301292.1">
    <property type="nucleotide sequence ID" value="NC_002677.1"/>
</dbReference>
<dbReference type="RefSeq" id="WP_010907616.1">
    <property type="nucleotide sequence ID" value="NC_002677.1"/>
</dbReference>
<dbReference type="SMR" id="Q9CD56"/>
<dbReference type="STRING" id="272631.gene:17574049"/>
<dbReference type="KEGG" id="mle:ML0232"/>
<dbReference type="PATRIC" id="fig|272631.5.peg.365"/>
<dbReference type="Leproma" id="ML0232"/>
<dbReference type="eggNOG" id="COG1521">
    <property type="taxonomic scope" value="Bacteria"/>
</dbReference>
<dbReference type="HOGENOM" id="CLU_066627_1_0_11"/>
<dbReference type="OrthoDB" id="9804707at2"/>
<dbReference type="UniPathway" id="UPA00241">
    <property type="reaction ID" value="UER00352"/>
</dbReference>
<dbReference type="Proteomes" id="UP000000806">
    <property type="component" value="Chromosome"/>
</dbReference>
<dbReference type="GO" id="GO:0005737">
    <property type="term" value="C:cytoplasm"/>
    <property type="evidence" value="ECO:0007669"/>
    <property type="project" value="UniProtKB-SubCell"/>
</dbReference>
<dbReference type="GO" id="GO:0005524">
    <property type="term" value="F:ATP binding"/>
    <property type="evidence" value="ECO:0007669"/>
    <property type="project" value="UniProtKB-UniRule"/>
</dbReference>
<dbReference type="GO" id="GO:0046872">
    <property type="term" value="F:metal ion binding"/>
    <property type="evidence" value="ECO:0007669"/>
    <property type="project" value="UniProtKB-KW"/>
</dbReference>
<dbReference type="GO" id="GO:0004594">
    <property type="term" value="F:pantothenate kinase activity"/>
    <property type="evidence" value="ECO:0007669"/>
    <property type="project" value="UniProtKB-UniRule"/>
</dbReference>
<dbReference type="GO" id="GO:0015937">
    <property type="term" value="P:coenzyme A biosynthetic process"/>
    <property type="evidence" value="ECO:0007669"/>
    <property type="project" value="UniProtKB-UniRule"/>
</dbReference>
<dbReference type="CDD" id="cd24015">
    <property type="entry name" value="ASKHA_NBD_PanK-III"/>
    <property type="match status" value="1"/>
</dbReference>
<dbReference type="Gene3D" id="3.30.420.40">
    <property type="match status" value="2"/>
</dbReference>
<dbReference type="HAMAP" id="MF_01274">
    <property type="entry name" value="Pantothen_kinase_3"/>
    <property type="match status" value="1"/>
</dbReference>
<dbReference type="InterPro" id="IPR043129">
    <property type="entry name" value="ATPase_NBD"/>
</dbReference>
<dbReference type="InterPro" id="IPR004619">
    <property type="entry name" value="Type_III_PanK"/>
</dbReference>
<dbReference type="NCBIfam" id="TIGR00671">
    <property type="entry name" value="baf"/>
    <property type="match status" value="1"/>
</dbReference>
<dbReference type="NCBIfam" id="NF009845">
    <property type="entry name" value="PRK13318.1-3"/>
    <property type="match status" value="1"/>
</dbReference>
<dbReference type="PANTHER" id="PTHR34265">
    <property type="entry name" value="TYPE III PANTOTHENATE KINASE"/>
    <property type="match status" value="1"/>
</dbReference>
<dbReference type="PANTHER" id="PTHR34265:SF1">
    <property type="entry name" value="TYPE III PANTOTHENATE KINASE"/>
    <property type="match status" value="1"/>
</dbReference>
<dbReference type="Pfam" id="PF03309">
    <property type="entry name" value="Pan_kinase"/>
    <property type="match status" value="1"/>
</dbReference>
<dbReference type="SUPFAM" id="SSF53067">
    <property type="entry name" value="Actin-like ATPase domain"/>
    <property type="match status" value="2"/>
</dbReference>
<sequence>MLLAIDVRNTHTVVGLLSGSKEHAKVVQQWRIRTESEVTADELALIIDGLIGDDSERLAGAAALSTVPSVLHEVRIMLDQYWPSVPHVLIEPGVRTGIPLLVDNPKEVGADRIVNCLAAFHKFGQAAIVVDFGSSICVDVVSAKGEFLGGAIAPGVQVSSDAAAARSAALRRVELARPRSVVGKNTVECMQAGVVFGFAGLVDGLVGRMRQDVEEFSGDLGNRVAVVATGHTAPLLLPELHTVDHYDRHLTLHGLRLVFERNREAQRGRLKTAR</sequence>
<name>COAX_MYCLE</name>
<reference key="1">
    <citation type="journal article" date="2001" name="Nature">
        <title>Massive gene decay in the leprosy bacillus.</title>
        <authorList>
            <person name="Cole S.T."/>
            <person name="Eiglmeier K."/>
            <person name="Parkhill J."/>
            <person name="James K.D."/>
            <person name="Thomson N.R."/>
            <person name="Wheeler P.R."/>
            <person name="Honore N."/>
            <person name="Garnier T."/>
            <person name="Churcher C.M."/>
            <person name="Harris D.E."/>
            <person name="Mungall K.L."/>
            <person name="Basham D."/>
            <person name="Brown D."/>
            <person name="Chillingworth T."/>
            <person name="Connor R."/>
            <person name="Davies R.M."/>
            <person name="Devlin K."/>
            <person name="Duthoy S."/>
            <person name="Feltwell T."/>
            <person name="Fraser A."/>
            <person name="Hamlin N."/>
            <person name="Holroyd S."/>
            <person name="Hornsby T."/>
            <person name="Jagels K."/>
            <person name="Lacroix C."/>
            <person name="Maclean J."/>
            <person name="Moule S."/>
            <person name="Murphy L.D."/>
            <person name="Oliver K."/>
            <person name="Quail M.A."/>
            <person name="Rajandream M.A."/>
            <person name="Rutherford K.M."/>
            <person name="Rutter S."/>
            <person name="Seeger K."/>
            <person name="Simon S."/>
            <person name="Simmonds M."/>
            <person name="Skelton J."/>
            <person name="Squares R."/>
            <person name="Squares S."/>
            <person name="Stevens K."/>
            <person name="Taylor K."/>
            <person name="Whitehead S."/>
            <person name="Woodward J.R."/>
            <person name="Barrell B.G."/>
        </authorList>
    </citation>
    <scope>NUCLEOTIDE SEQUENCE [LARGE SCALE GENOMIC DNA]</scope>
    <source>
        <strain>TN</strain>
    </source>
</reference>
<organism>
    <name type="scientific">Mycobacterium leprae (strain TN)</name>
    <dbReference type="NCBI Taxonomy" id="272631"/>
    <lineage>
        <taxon>Bacteria</taxon>
        <taxon>Bacillati</taxon>
        <taxon>Actinomycetota</taxon>
        <taxon>Actinomycetes</taxon>
        <taxon>Mycobacteriales</taxon>
        <taxon>Mycobacteriaceae</taxon>
        <taxon>Mycobacterium</taxon>
    </lineage>
</organism>
<gene>
    <name evidence="1" type="primary">coaX</name>
    <name type="ordered locus">ML0232</name>
</gene>
<comment type="function">
    <text evidence="1">Catalyzes the phosphorylation of pantothenate (Pan), the first step in CoA biosynthesis.</text>
</comment>
<comment type="catalytic activity">
    <reaction evidence="1">
        <text>(R)-pantothenate + ATP = (R)-4'-phosphopantothenate + ADP + H(+)</text>
        <dbReference type="Rhea" id="RHEA:16373"/>
        <dbReference type="ChEBI" id="CHEBI:10986"/>
        <dbReference type="ChEBI" id="CHEBI:15378"/>
        <dbReference type="ChEBI" id="CHEBI:29032"/>
        <dbReference type="ChEBI" id="CHEBI:30616"/>
        <dbReference type="ChEBI" id="CHEBI:456216"/>
        <dbReference type="EC" id="2.7.1.33"/>
    </reaction>
</comment>
<comment type="cofactor">
    <cofactor evidence="1">
        <name>NH4(+)</name>
        <dbReference type="ChEBI" id="CHEBI:28938"/>
    </cofactor>
    <cofactor evidence="1">
        <name>K(+)</name>
        <dbReference type="ChEBI" id="CHEBI:29103"/>
    </cofactor>
    <text evidence="1">A monovalent cation. Ammonium or potassium.</text>
</comment>
<comment type="pathway">
    <text evidence="1">Cofactor biosynthesis; coenzyme A biosynthesis; CoA from (R)-pantothenate: step 1/5.</text>
</comment>
<comment type="subunit">
    <text evidence="1">Homodimer.</text>
</comment>
<comment type="subcellular location">
    <subcellularLocation>
        <location evidence="1">Cytoplasm</location>
    </subcellularLocation>
</comment>
<comment type="similarity">
    <text evidence="1">Belongs to the type III pantothenate kinase family.</text>
</comment>
<protein>
    <recommendedName>
        <fullName evidence="1">Type III pantothenate kinase</fullName>
        <ecNumber evidence="1">2.7.1.33</ecNumber>
    </recommendedName>
    <alternativeName>
        <fullName evidence="1">PanK-III</fullName>
    </alternativeName>
    <alternativeName>
        <fullName evidence="1">Pantothenic acid kinase</fullName>
    </alternativeName>
</protein>
<evidence type="ECO:0000255" key="1">
    <source>
        <dbReference type="HAMAP-Rule" id="MF_01274"/>
    </source>
</evidence>
<accession>Q9CD56</accession>
<keyword id="KW-0067">ATP-binding</keyword>
<keyword id="KW-0173">Coenzyme A biosynthesis</keyword>
<keyword id="KW-0963">Cytoplasm</keyword>
<keyword id="KW-0418">Kinase</keyword>
<keyword id="KW-0479">Metal-binding</keyword>
<keyword id="KW-0547">Nucleotide-binding</keyword>
<keyword id="KW-0630">Potassium</keyword>
<keyword id="KW-1185">Reference proteome</keyword>
<keyword id="KW-0808">Transferase</keyword>
<feature type="chain" id="PRO_0000267563" description="Type III pantothenate kinase">
    <location>
        <begin position="1"/>
        <end position="274"/>
    </location>
</feature>
<feature type="active site" description="Proton acceptor" evidence="1">
    <location>
        <position position="111"/>
    </location>
</feature>
<feature type="binding site" evidence="1">
    <location>
        <begin position="6"/>
        <end position="13"/>
    </location>
    <ligand>
        <name>ATP</name>
        <dbReference type="ChEBI" id="CHEBI:30616"/>
    </ligand>
</feature>
<feature type="binding site" evidence="1">
    <location>
        <begin position="109"/>
        <end position="112"/>
    </location>
    <ligand>
        <name>substrate</name>
    </ligand>
</feature>
<feature type="binding site" evidence="1">
    <location>
        <position position="131"/>
    </location>
    <ligand>
        <name>K(+)</name>
        <dbReference type="ChEBI" id="CHEBI:29103"/>
    </ligand>
</feature>
<feature type="binding site" evidence="1">
    <location>
        <position position="134"/>
    </location>
    <ligand>
        <name>ATP</name>
        <dbReference type="ChEBI" id="CHEBI:30616"/>
    </ligand>
</feature>
<feature type="binding site" evidence="1">
    <location>
        <position position="186"/>
    </location>
    <ligand>
        <name>substrate</name>
    </ligand>
</feature>
<proteinExistence type="inferred from homology"/>